<keyword id="KW-0067">ATP-binding</keyword>
<keyword id="KW-0963">Cytoplasm</keyword>
<keyword id="KW-0237">DNA synthesis</keyword>
<keyword id="KW-0418">Kinase</keyword>
<keyword id="KW-0479">Metal-binding</keyword>
<keyword id="KW-0547">Nucleotide-binding</keyword>
<keyword id="KW-0808">Transferase</keyword>
<keyword id="KW-0862">Zinc</keyword>
<dbReference type="EC" id="2.7.1.21" evidence="1"/>
<dbReference type="EMBL" id="AL513382">
    <property type="protein sequence ID" value="CAD08383.1"/>
    <property type="molecule type" value="Genomic_DNA"/>
</dbReference>
<dbReference type="EMBL" id="AE014613">
    <property type="protein sequence ID" value="AAO69287.1"/>
    <property type="molecule type" value="Genomic_DNA"/>
</dbReference>
<dbReference type="RefSeq" id="NP_455750.1">
    <property type="nucleotide sequence ID" value="NC_003198.1"/>
</dbReference>
<dbReference type="RefSeq" id="WP_000068097.1">
    <property type="nucleotide sequence ID" value="NZ_WSUR01000006.1"/>
</dbReference>
<dbReference type="SMR" id="Q8XFQ8"/>
<dbReference type="STRING" id="220341.gene:17585263"/>
<dbReference type="KEGG" id="stt:t1661"/>
<dbReference type="KEGG" id="sty:STY1301"/>
<dbReference type="PATRIC" id="fig|220341.7.peg.1307"/>
<dbReference type="eggNOG" id="COG1435">
    <property type="taxonomic scope" value="Bacteria"/>
</dbReference>
<dbReference type="HOGENOM" id="CLU_064400_2_1_6"/>
<dbReference type="OMA" id="GTMDCGK"/>
<dbReference type="OrthoDB" id="9781579at2"/>
<dbReference type="BRENDA" id="2.7.1.21">
    <property type="organism ID" value="5557"/>
</dbReference>
<dbReference type="Proteomes" id="UP000000541">
    <property type="component" value="Chromosome"/>
</dbReference>
<dbReference type="Proteomes" id="UP000002670">
    <property type="component" value="Chromosome"/>
</dbReference>
<dbReference type="GO" id="GO:0005829">
    <property type="term" value="C:cytosol"/>
    <property type="evidence" value="ECO:0007669"/>
    <property type="project" value="TreeGrafter"/>
</dbReference>
<dbReference type="GO" id="GO:0005524">
    <property type="term" value="F:ATP binding"/>
    <property type="evidence" value="ECO:0007669"/>
    <property type="project" value="UniProtKB-UniRule"/>
</dbReference>
<dbReference type="GO" id="GO:0004797">
    <property type="term" value="F:thymidine kinase activity"/>
    <property type="evidence" value="ECO:0007669"/>
    <property type="project" value="UniProtKB-UniRule"/>
</dbReference>
<dbReference type="GO" id="GO:0008270">
    <property type="term" value="F:zinc ion binding"/>
    <property type="evidence" value="ECO:0007669"/>
    <property type="project" value="UniProtKB-UniRule"/>
</dbReference>
<dbReference type="GO" id="GO:0071897">
    <property type="term" value="P:DNA biosynthetic process"/>
    <property type="evidence" value="ECO:0007669"/>
    <property type="project" value="UniProtKB-KW"/>
</dbReference>
<dbReference type="GO" id="GO:0046104">
    <property type="term" value="P:thymidine metabolic process"/>
    <property type="evidence" value="ECO:0007669"/>
    <property type="project" value="TreeGrafter"/>
</dbReference>
<dbReference type="FunFam" id="3.30.60.20:FF:000017">
    <property type="entry name" value="Thymidine kinase"/>
    <property type="match status" value="1"/>
</dbReference>
<dbReference type="FunFam" id="3.40.50.300:FF:000323">
    <property type="entry name" value="Thymidine kinase"/>
    <property type="match status" value="1"/>
</dbReference>
<dbReference type="Gene3D" id="3.30.60.20">
    <property type="match status" value="1"/>
</dbReference>
<dbReference type="Gene3D" id="3.40.50.300">
    <property type="entry name" value="P-loop containing nucleotide triphosphate hydrolases"/>
    <property type="match status" value="1"/>
</dbReference>
<dbReference type="HAMAP" id="MF_00124">
    <property type="entry name" value="Thymidine_kinase"/>
    <property type="match status" value="1"/>
</dbReference>
<dbReference type="InterPro" id="IPR027417">
    <property type="entry name" value="P-loop_NTPase"/>
</dbReference>
<dbReference type="InterPro" id="IPR001267">
    <property type="entry name" value="Thymidine_kinase"/>
</dbReference>
<dbReference type="InterPro" id="IPR020633">
    <property type="entry name" value="Thymidine_kinase_CS"/>
</dbReference>
<dbReference type="NCBIfam" id="NF003298">
    <property type="entry name" value="PRK04296.1-3"/>
    <property type="match status" value="1"/>
</dbReference>
<dbReference type="NCBIfam" id="NF003300">
    <property type="entry name" value="PRK04296.1-5"/>
    <property type="match status" value="1"/>
</dbReference>
<dbReference type="PANTHER" id="PTHR11441">
    <property type="entry name" value="THYMIDINE KINASE"/>
    <property type="match status" value="1"/>
</dbReference>
<dbReference type="PANTHER" id="PTHR11441:SF0">
    <property type="entry name" value="THYMIDINE KINASE, CYTOSOLIC"/>
    <property type="match status" value="1"/>
</dbReference>
<dbReference type="Pfam" id="PF00265">
    <property type="entry name" value="TK"/>
    <property type="match status" value="1"/>
</dbReference>
<dbReference type="PIRSF" id="PIRSF035805">
    <property type="entry name" value="TK_cell"/>
    <property type="match status" value="1"/>
</dbReference>
<dbReference type="SUPFAM" id="SSF57716">
    <property type="entry name" value="Glucocorticoid receptor-like (DNA-binding domain)"/>
    <property type="match status" value="1"/>
</dbReference>
<dbReference type="SUPFAM" id="SSF52540">
    <property type="entry name" value="P-loop containing nucleoside triphosphate hydrolases"/>
    <property type="match status" value="1"/>
</dbReference>
<dbReference type="PROSITE" id="PS00603">
    <property type="entry name" value="TK_CELLULAR_TYPE"/>
    <property type="match status" value="1"/>
</dbReference>
<protein>
    <recommendedName>
        <fullName evidence="1">Thymidine kinase</fullName>
        <ecNumber evidence="1">2.7.1.21</ecNumber>
    </recommendedName>
</protein>
<sequence length="205" mass="23405">MAQLYFYYSAMNAGKSTALLQSSYNYQERGMRTVVYTAEIDDRFGAGKVSSRIGLSSPAKLFNQNTSLFEEIRAESARQTIHCVLVDESQFLTRQQVYQLSEVVDKLDIPVLCYGLRTDFRGELFVGSQYLLAWSDKLVELKTICFCGRKASMVLRLDQDGRPYNEGEQVVIGGNERYVSVCRKHYKDALEEGSLTAIQERHRHI</sequence>
<comment type="catalytic activity">
    <reaction evidence="1">
        <text>thymidine + ATP = dTMP + ADP + H(+)</text>
        <dbReference type="Rhea" id="RHEA:19129"/>
        <dbReference type="ChEBI" id="CHEBI:15378"/>
        <dbReference type="ChEBI" id="CHEBI:17748"/>
        <dbReference type="ChEBI" id="CHEBI:30616"/>
        <dbReference type="ChEBI" id="CHEBI:63528"/>
        <dbReference type="ChEBI" id="CHEBI:456216"/>
        <dbReference type="EC" id="2.7.1.21"/>
    </reaction>
</comment>
<comment type="subunit">
    <text evidence="1">Homotetramer.</text>
</comment>
<comment type="subcellular location">
    <subcellularLocation>
        <location evidence="1">Cytoplasm</location>
    </subcellularLocation>
</comment>
<comment type="similarity">
    <text evidence="1">Belongs to the thymidine kinase family.</text>
</comment>
<feature type="chain" id="PRO_0000175013" description="Thymidine kinase">
    <location>
        <begin position="1"/>
        <end position="205"/>
    </location>
</feature>
<feature type="active site" description="Proton acceptor" evidence="1">
    <location>
        <position position="88"/>
    </location>
</feature>
<feature type="binding site" evidence="1">
    <location>
        <begin position="9"/>
        <end position="16"/>
    </location>
    <ligand>
        <name>ATP</name>
        <dbReference type="ChEBI" id="CHEBI:30616"/>
    </ligand>
</feature>
<feature type="binding site" evidence="1">
    <location>
        <begin position="87"/>
        <end position="90"/>
    </location>
    <ligand>
        <name>ATP</name>
        <dbReference type="ChEBI" id="CHEBI:30616"/>
    </ligand>
</feature>
<feature type="binding site" evidence="1">
    <location>
        <position position="145"/>
    </location>
    <ligand>
        <name>Zn(2+)</name>
        <dbReference type="ChEBI" id="CHEBI:29105"/>
    </ligand>
</feature>
<feature type="binding site" evidence="1">
    <location>
        <position position="147"/>
    </location>
    <ligand>
        <name>Zn(2+)</name>
        <dbReference type="ChEBI" id="CHEBI:29105"/>
    </ligand>
</feature>
<feature type="binding site" evidence="1">
    <location>
        <position position="182"/>
    </location>
    <ligand>
        <name>Zn(2+)</name>
        <dbReference type="ChEBI" id="CHEBI:29105"/>
    </ligand>
</feature>
<feature type="binding site" evidence="1">
    <location>
        <position position="185"/>
    </location>
    <ligand>
        <name>Zn(2+)</name>
        <dbReference type="ChEBI" id="CHEBI:29105"/>
    </ligand>
</feature>
<evidence type="ECO:0000255" key="1">
    <source>
        <dbReference type="HAMAP-Rule" id="MF_00124"/>
    </source>
</evidence>
<gene>
    <name evidence="1" type="primary">tdk</name>
    <name type="ordered locus">STY1301</name>
    <name type="ordered locus">t1661</name>
</gene>
<reference key="1">
    <citation type="journal article" date="2001" name="Nature">
        <title>Complete genome sequence of a multiple drug resistant Salmonella enterica serovar Typhi CT18.</title>
        <authorList>
            <person name="Parkhill J."/>
            <person name="Dougan G."/>
            <person name="James K.D."/>
            <person name="Thomson N.R."/>
            <person name="Pickard D."/>
            <person name="Wain J."/>
            <person name="Churcher C.M."/>
            <person name="Mungall K.L."/>
            <person name="Bentley S.D."/>
            <person name="Holden M.T.G."/>
            <person name="Sebaihia M."/>
            <person name="Baker S."/>
            <person name="Basham D."/>
            <person name="Brooks K."/>
            <person name="Chillingworth T."/>
            <person name="Connerton P."/>
            <person name="Cronin A."/>
            <person name="Davis P."/>
            <person name="Davies R.M."/>
            <person name="Dowd L."/>
            <person name="White N."/>
            <person name="Farrar J."/>
            <person name="Feltwell T."/>
            <person name="Hamlin N."/>
            <person name="Haque A."/>
            <person name="Hien T.T."/>
            <person name="Holroyd S."/>
            <person name="Jagels K."/>
            <person name="Krogh A."/>
            <person name="Larsen T.S."/>
            <person name="Leather S."/>
            <person name="Moule S."/>
            <person name="O'Gaora P."/>
            <person name="Parry C."/>
            <person name="Quail M.A."/>
            <person name="Rutherford K.M."/>
            <person name="Simmonds M."/>
            <person name="Skelton J."/>
            <person name="Stevens K."/>
            <person name="Whitehead S."/>
            <person name="Barrell B.G."/>
        </authorList>
    </citation>
    <scope>NUCLEOTIDE SEQUENCE [LARGE SCALE GENOMIC DNA]</scope>
    <source>
        <strain>CT18</strain>
    </source>
</reference>
<reference key="2">
    <citation type="journal article" date="2003" name="J. Bacteriol.">
        <title>Comparative genomics of Salmonella enterica serovar Typhi strains Ty2 and CT18.</title>
        <authorList>
            <person name="Deng W."/>
            <person name="Liou S.-R."/>
            <person name="Plunkett G. III"/>
            <person name="Mayhew G.F."/>
            <person name="Rose D.J."/>
            <person name="Burland V."/>
            <person name="Kodoyianni V."/>
            <person name="Schwartz D.C."/>
            <person name="Blattner F.R."/>
        </authorList>
    </citation>
    <scope>NUCLEOTIDE SEQUENCE [LARGE SCALE GENOMIC DNA]</scope>
    <source>
        <strain>ATCC 700931 / Ty2</strain>
    </source>
</reference>
<organism>
    <name type="scientific">Salmonella typhi</name>
    <dbReference type="NCBI Taxonomy" id="90370"/>
    <lineage>
        <taxon>Bacteria</taxon>
        <taxon>Pseudomonadati</taxon>
        <taxon>Pseudomonadota</taxon>
        <taxon>Gammaproteobacteria</taxon>
        <taxon>Enterobacterales</taxon>
        <taxon>Enterobacteriaceae</taxon>
        <taxon>Salmonella</taxon>
    </lineage>
</organism>
<proteinExistence type="inferred from homology"/>
<accession>Q8XFQ8</accession>
<accession>Q7AN37</accession>
<name>KITH_SALTI</name>